<evidence type="ECO:0000255" key="1">
    <source>
        <dbReference type="HAMAP-Rule" id="MF_00146"/>
    </source>
</evidence>
<feature type="chain" id="PRO_1000009752" description="dCTP deaminase, dUMP-forming">
    <location>
        <begin position="1"/>
        <end position="206"/>
    </location>
</feature>
<feature type="active site" description="Proton donor/acceptor" evidence="1">
    <location>
        <position position="145"/>
    </location>
</feature>
<feature type="binding site" evidence="1">
    <location>
        <begin position="117"/>
        <end position="122"/>
    </location>
    <ligand>
        <name>dCTP</name>
        <dbReference type="ChEBI" id="CHEBI:61481"/>
    </ligand>
</feature>
<feature type="binding site" evidence="1">
    <location>
        <position position="135"/>
    </location>
    <ligand>
        <name>dCTP</name>
        <dbReference type="ChEBI" id="CHEBI:61481"/>
    </ligand>
</feature>
<feature type="binding site" evidence="1">
    <location>
        <begin position="143"/>
        <end position="145"/>
    </location>
    <ligand>
        <name>dCTP</name>
        <dbReference type="ChEBI" id="CHEBI:61481"/>
    </ligand>
</feature>
<feature type="binding site" evidence="1">
    <location>
        <position position="163"/>
    </location>
    <ligand>
        <name>dCTP</name>
        <dbReference type="ChEBI" id="CHEBI:61481"/>
    </ligand>
</feature>
<feature type="binding site" evidence="1">
    <location>
        <position position="177"/>
    </location>
    <ligand>
        <name>dCTP</name>
        <dbReference type="ChEBI" id="CHEBI:61481"/>
    </ligand>
</feature>
<feature type="binding site" evidence="1">
    <location>
        <position position="184"/>
    </location>
    <ligand>
        <name>dCTP</name>
        <dbReference type="ChEBI" id="CHEBI:61481"/>
    </ligand>
</feature>
<feature type="binding site" evidence="1">
    <location>
        <position position="188"/>
    </location>
    <ligand>
        <name>dCTP</name>
        <dbReference type="ChEBI" id="CHEBI:61481"/>
    </ligand>
</feature>
<feature type="site" description="Important for bifunctional activity" evidence="1">
    <location>
        <begin position="132"/>
        <end position="133"/>
    </location>
</feature>
<organism>
    <name type="scientific">Methanococcus maripaludis (strain C5 / ATCC BAA-1333)</name>
    <dbReference type="NCBI Taxonomy" id="402880"/>
    <lineage>
        <taxon>Archaea</taxon>
        <taxon>Methanobacteriati</taxon>
        <taxon>Methanobacteriota</taxon>
        <taxon>Methanomada group</taxon>
        <taxon>Methanococci</taxon>
        <taxon>Methanococcales</taxon>
        <taxon>Methanococcaceae</taxon>
        <taxon>Methanococcus</taxon>
    </lineage>
</organism>
<reference key="1">
    <citation type="submission" date="2007-03" db="EMBL/GenBank/DDBJ databases">
        <title>Complete sequence of chromosome of Methanococcus maripaludis C5.</title>
        <authorList>
            <consortium name="US DOE Joint Genome Institute"/>
            <person name="Copeland A."/>
            <person name="Lucas S."/>
            <person name="Lapidus A."/>
            <person name="Barry K."/>
            <person name="Glavina del Rio T."/>
            <person name="Dalin E."/>
            <person name="Tice H."/>
            <person name="Pitluck S."/>
            <person name="Chertkov O."/>
            <person name="Brettin T."/>
            <person name="Bruce D."/>
            <person name="Han C."/>
            <person name="Detter J.C."/>
            <person name="Schmutz J."/>
            <person name="Larimer F."/>
            <person name="Land M."/>
            <person name="Hauser L."/>
            <person name="Kyrpides N."/>
            <person name="Mikhailova N."/>
            <person name="Sieprawska-Lupa M."/>
            <person name="Whitman W.B."/>
            <person name="Richardson P."/>
        </authorList>
    </citation>
    <scope>NUCLEOTIDE SEQUENCE [LARGE SCALE GENOMIC DNA]</scope>
    <source>
        <strain>C5 / ATCC BAA-1333</strain>
    </source>
</reference>
<keyword id="KW-0378">Hydrolase</keyword>
<keyword id="KW-0546">Nucleotide metabolism</keyword>
<keyword id="KW-0547">Nucleotide-binding</keyword>
<name>DCDB_METM5</name>
<protein>
    <recommendedName>
        <fullName evidence="1">dCTP deaminase, dUMP-forming</fullName>
        <ecNumber evidence="1">3.5.4.30</ecNumber>
    </recommendedName>
    <alternativeName>
        <fullName evidence="1">Bifunctional dCTP deaminase:dUTPase</fullName>
    </alternativeName>
    <alternativeName>
        <fullName evidence="1">DCD-DUT</fullName>
    </alternativeName>
</protein>
<gene>
    <name evidence="1" type="primary">dcd</name>
    <name type="ordered locus">MmarC5_0152</name>
</gene>
<sequence length="206" mass="23459">MILSDKDIFDYVNSKRVLIEPFNSKFVGPCSYDVTLGSEFIKYKDDVYDLKKSLSHNKFEIENSIMICPLNHHLDETIIKNYKEKYNVNCVVSGGLLGTTNEYVELPNDVCAQYQGRSSFGRVFLQTHQTAGWIDSGFKGKITLEIVAYDKPVILYKNQRVGQLIFSKTLSPADTGYSDRECSKYAGQKSVMASLIKKDFEIDEEE</sequence>
<dbReference type="EC" id="3.5.4.30" evidence="1"/>
<dbReference type="EMBL" id="CP000609">
    <property type="protein sequence ID" value="ABO34469.1"/>
    <property type="molecule type" value="Genomic_DNA"/>
</dbReference>
<dbReference type="RefSeq" id="WP_011867929.1">
    <property type="nucleotide sequence ID" value="NC_009135.1"/>
</dbReference>
<dbReference type="SMR" id="A4FW98"/>
<dbReference type="STRING" id="402880.MmarC5_0152"/>
<dbReference type="GeneID" id="4927861"/>
<dbReference type="KEGG" id="mmq:MmarC5_0152"/>
<dbReference type="eggNOG" id="arCOG04048">
    <property type="taxonomic scope" value="Archaea"/>
</dbReference>
<dbReference type="HOGENOM" id="CLU_087476_2_1_2"/>
<dbReference type="OrthoDB" id="33242at2157"/>
<dbReference type="UniPathway" id="UPA00610">
    <property type="reaction ID" value="UER00667"/>
</dbReference>
<dbReference type="Proteomes" id="UP000000253">
    <property type="component" value="Chromosome"/>
</dbReference>
<dbReference type="GO" id="GO:0033973">
    <property type="term" value="F:dCTP deaminase (dUMP-forming) activity"/>
    <property type="evidence" value="ECO:0007669"/>
    <property type="project" value="UniProtKB-UniRule"/>
</dbReference>
<dbReference type="GO" id="GO:0008829">
    <property type="term" value="F:dCTP deaminase activity"/>
    <property type="evidence" value="ECO:0007669"/>
    <property type="project" value="InterPro"/>
</dbReference>
<dbReference type="GO" id="GO:0000166">
    <property type="term" value="F:nucleotide binding"/>
    <property type="evidence" value="ECO:0007669"/>
    <property type="project" value="UniProtKB-KW"/>
</dbReference>
<dbReference type="GO" id="GO:0006226">
    <property type="term" value="P:dUMP biosynthetic process"/>
    <property type="evidence" value="ECO:0007669"/>
    <property type="project" value="UniProtKB-UniRule"/>
</dbReference>
<dbReference type="GO" id="GO:0006229">
    <property type="term" value="P:dUTP biosynthetic process"/>
    <property type="evidence" value="ECO:0007669"/>
    <property type="project" value="InterPro"/>
</dbReference>
<dbReference type="CDD" id="cd07557">
    <property type="entry name" value="trimeric_dUTPase"/>
    <property type="match status" value="1"/>
</dbReference>
<dbReference type="Gene3D" id="2.70.40.10">
    <property type="match status" value="1"/>
</dbReference>
<dbReference type="HAMAP" id="MF_00146">
    <property type="entry name" value="dCTP_deaminase"/>
    <property type="match status" value="1"/>
</dbReference>
<dbReference type="InterPro" id="IPR011962">
    <property type="entry name" value="dCTP_deaminase"/>
</dbReference>
<dbReference type="InterPro" id="IPR036157">
    <property type="entry name" value="dUTPase-like_sf"/>
</dbReference>
<dbReference type="InterPro" id="IPR033704">
    <property type="entry name" value="dUTPase_trimeric"/>
</dbReference>
<dbReference type="NCBIfam" id="TIGR02274">
    <property type="entry name" value="dCTP_deam"/>
    <property type="match status" value="1"/>
</dbReference>
<dbReference type="PANTHER" id="PTHR42680">
    <property type="entry name" value="DCTP DEAMINASE"/>
    <property type="match status" value="1"/>
</dbReference>
<dbReference type="PANTHER" id="PTHR42680:SF3">
    <property type="entry name" value="DCTP DEAMINASE"/>
    <property type="match status" value="1"/>
</dbReference>
<dbReference type="Pfam" id="PF22769">
    <property type="entry name" value="DCD"/>
    <property type="match status" value="1"/>
</dbReference>
<dbReference type="SUPFAM" id="SSF51283">
    <property type="entry name" value="dUTPase-like"/>
    <property type="match status" value="1"/>
</dbReference>
<proteinExistence type="inferred from homology"/>
<comment type="function">
    <text evidence="1">Bifunctional enzyme that catalyzes both the deamination of dCTP to dUTP and the hydrolysis of dUTP to dUMP without releasing the toxic dUTP intermediate.</text>
</comment>
<comment type="catalytic activity">
    <reaction evidence="1">
        <text>dCTP + 2 H2O = dUMP + NH4(+) + diphosphate</text>
        <dbReference type="Rhea" id="RHEA:19205"/>
        <dbReference type="ChEBI" id="CHEBI:15377"/>
        <dbReference type="ChEBI" id="CHEBI:28938"/>
        <dbReference type="ChEBI" id="CHEBI:33019"/>
        <dbReference type="ChEBI" id="CHEBI:61481"/>
        <dbReference type="ChEBI" id="CHEBI:246422"/>
        <dbReference type="EC" id="3.5.4.30"/>
    </reaction>
</comment>
<comment type="pathway">
    <text evidence="1">Pyrimidine metabolism; dUMP biosynthesis; dUMP from dCTP: step 1/1.</text>
</comment>
<comment type="subunit">
    <text evidence="1">Homotrimer.</text>
</comment>
<comment type="similarity">
    <text evidence="1">Belongs to the dCTP deaminase family.</text>
</comment>
<accession>A4FW98</accession>